<organismHost>
    <name type="scientific">Gallus gallus</name>
    <name type="common">Chicken</name>
    <dbReference type="NCBI Taxonomy" id="9031"/>
</organismHost>
<organism>
    <name type="scientific">Gallid herpesvirus 2 (strain Chicken/Md5/ATCC VR-987)</name>
    <name type="common">GaHV-2</name>
    <name type="synonym">Marek's disease herpesvirus type 1</name>
    <dbReference type="NCBI Taxonomy" id="10389"/>
    <lineage>
        <taxon>Viruses</taxon>
        <taxon>Duplodnaviria</taxon>
        <taxon>Heunggongvirae</taxon>
        <taxon>Peploviricota</taxon>
        <taxon>Herviviricetes</taxon>
        <taxon>Herpesvirales</taxon>
        <taxon>Orthoherpesviridae</taxon>
        <taxon>Alphaherpesvirinae</taxon>
        <taxon>Mardivirus</taxon>
        <taxon>Mardivirus gallidalpha2</taxon>
        <taxon>Gallid alphaherpesvirus 2</taxon>
    </lineage>
</organism>
<gene>
    <name type="primary">MDV033</name>
</gene>
<protein>
    <recommendedName>
        <fullName>Tegument protein UL21 homolog</fullName>
    </recommendedName>
</protein>
<feature type="chain" id="PRO_0000406585" description="Tegument protein UL21 homolog">
    <location>
        <begin position="1"/>
        <end position="546"/>
    </location>
</feature>
<dbReference type="EMBL" id="AF243438">
    <property type="protein sequence ID" value="AAG14213.1"/>
    <property type="molecule type" value="Genomic_DNA"/>
</dbReference>
<dbReference type="RefSeq" id="YP_001033949.1">
    <property type="nucleotide sequence ID" value="NC_002229.3"/>
</dbReference>
<dbReference type="SMR" id="Q9E6P7"/>
<dbReference type="GeneID" id="4811494"/>
<dbReference type="KEGG" id="vg:4811494"/>
<dbReference type="Proteomes" id="UP000008072">
    <property type="component" value="Segment"/>
</dbReference>
<dbReference type="GO" id="GO:0030430">
    <property type="term" value="C:host cell cytoplasm"/>
    <property type="evidence" value="ECO:0007669"/>
    <property type="project" value="UniProtKB-SubCell"/>
</dbReference>
<dbReference type="GO" id="GO:0042025">
    <property type="term" value="C:host cell nucleus"/>
    <property type="evidence" value="ECO:0007669"/>
    <property type="project" value="UniProtKB-SubCell"/>
</dbReference>
<dbReference type="GO" id="GO:0019033">
    <property type="term" value="C:viral tegument"/>
    <property type="evidence" value="ECO:0007669"/>
    <property type="project" value="UniProtKB-SubCell"/>
</dbReference>
<dbReference type="InterPro" id="IPR004936">
    <property type="entry name" value="Herpes_UL21"/>
</dbReference>
<dbReference type="Pfam" id="PF03252">
    <property type="entry name" value="Herpes_UL21"/>
    <property type="match status" value="1"/>
</dbReference>
<keyword id="KW-1035">Host cytoplasm</keyword>
<keyword id="KW-1048">Host nucleus</keyword>
<keyword id="KW-1185">Reference proteome</keyword>
<keyword id="KW-0946">Virion</keyword>
<keyword id="KW-0920">Virion tegument</keyword>
<name>TG21_GAHVM</name>
<comment type="function">
    <text evidence="1">May facilitate the viral transport through neural circuits.</text>
</comment>
<comment type="subcellular location">
    <subcellularLocation>
        <location evidence="1">Virion tegument</location>
    </subcellularLocation>
    <subcellularLocation>
        <location evidence="1">Host cytoplasm</location>
    </subcellularLocation>
    <subcellularLocation>
        <location evidence="1">Host nucleus</location>
    </subcellularLocation>
</comment>
<comment type="similarity">
    <text evidence="2">Belongs to the alphaherpesvirinae HHV-1 UL21 protein family.</text>
</comment>
<evidence type="ECO:0000250" key="1"/>
<evidence type="ECO:0000305" key="2"/>
<accession>Q9E6P7</accession>
<proteinExistence type="inferred from homology"/>
<sequence length="546" mass="61225">MDIKYGHVLAYRNVQFYVSECGYKAYFFCGGCLFAVGRPRIDDEYLPELAKIGLVLRGGQSKPLAAHVRRELLRRGMKWAFSSDEDELFIDSIAVLSRDGICSERELCGLLCLETYDPDIAKYMVPTNAISGLTIQAAYDFPHDRTIHIPEFPIITDIYSDLVYECSRDAFVLTCARLTELPKSLSDLVEGLFDGIPTPREALSSEIFGRRVDVIVTAKKAANTTTVQRAWDILQHGCRGKLNVNSNRTNPVQRKKHARFSSFVQIKYIPPVFKIWSCDTSSCMPSTSLNKLWEIFWKVDSVFNMNMLNLNSNLYTENGSQSDLEIIQSELGMISNALFGRHASMFVGVGPENKNISPSQKFLLLQYIHILNRLPNCYDLIRELCDHHTSTIEGECPTAMPDCALADMTNSLFRAILFLGMATEIVVNWMPSSLEEPTSRVPSPSAFADATTLLDVAETSAPKSIQDLKIRKLALILDGLYKDIDPIDVALRESVGEDTAELLCAAIDISVLSAFEHWGYYSRYMQCIISLIDTRLRNSGCITICS</sequence>
<reference key="1">
    <citation type="journal article" date="2000" name="J. Virol.">
        <title>The genome of a very virulent Marek's disease virus.</title>
        <authorList>
            <person name="Tulman E.R."/>
            <person name="Afonso C.L."/>
            <person name="Lu Z."/>
            <person name="Zsak L."/>
            <person name="Rock D.L."/>
            <person name="Kutish G.F."/>
        </authorList>
    </citation>
    <scope>NUCLEOTIDE SEQUENCE [LARGE SCALE GENOMIC DNA]</scope>
</reference>